<gene>
    <name evidence="1" type="primary">rpsM</name>
    <name type="ordered locus">Bpro_0498</name>
</gene>
<accession>Q12G80</accession>
<protein>
    <recommendedName>
        <fullName evidence="1">Small ribosomal subunit protein uS13</fullName>
    </recommendedName>
    <alternativeName>
        <fullName evidence="3">30S ribosomal protein S13</fullName>
    </alternativeName>
</protein>
<comment type="function">
    <text evidence="1">Located at the top of the head of the 30S subunit, it contacts several helices of the 16S rRNA. In the 70S ribosome it contacts the 23S rRNA (bridge B1a) and protein L5 of the 50S subunit (bridge B1b), connecting the 2 subunits; these bridges are implicated in subunit movement. Contacts the tRNAs in the A and P-sites.</text>
</comment>
<comment type="subunit">
    <text evidence="1">Part of the 30S ribosomal subunit. Forms a loose heterodimer with protein S19. Forms two bridges to the 50S subunit in the 70S ribosome.</text>
</comment>
<comment type="similarity">
    <text evidence="1">Belongs to the universal ribosomal protein uS13 family.</text>
</comment>
<proteinExistence type="inferred from homology"/>
<organism>
    <name type="scientific">Polaromonas sp. (strain JS666 / ATCC BAA-500)</name>
    <dbReference type="NCBI Taxonomy" id="296591"/>
    <lineage>
        <taxon>Bacteria</taxon>
        <taxon>Pseudomonadati</taxon>
        <taxon>Pseudomonadota</taxon>
        <taxon>Betaproteobacteria</taxon>
        <taxon>Burkholderiales</taxon>
        <taxon>Comamonadaceae</taxon>
        <taxon>Polaromonas</taxon>
    </lineage>
</organism>
<name>RS13_POLSJ</name>
<feature type="chain" id="PRO_0000306673" description="Small ribosomal subunit protein uS13">
    <location>
        <begin position="1"/>
        <end position="121"/>
    </location>
</feature>
<feature type="region of interest" description="Disordered" evidence="2">
    <location>
        <begin position="94"/>
        <end position="121"/>
    </location>
</feature>
<keyword id="KW-1185">Reference proteome</keyword>
<keyword id="KW-0687">Ribonucleoprotein</keyword>
<keyword id="KW-0689">Ribosomal protein</keyword>
<keyword id="KW-0694">RNA-binding</keyword>
<keyword id="KW-0699">rRNA-binding</keyword>
<keyword id="KW-0820">tRNA-binding</keyword>
<dbReference type="EMBL" id="CP000316">
    <property type="protein sequence ID" value="ABE42462.1"/>
    <property type="molecule type" value="Genomic_DNA"/>
</dbReference>
<dbReference type="RefSeq" id="WP_011481466.1">
    <property type="nucleotide sequence ID" value="NC_007948.1"/>
</dbReference>
<dbReference type="SMR" id="Q12G80"/>
<dbReference type="STRING" id="296591.Bpro_0498"/>
<dbReference type="KEGG" id="pol:Bpro_0498"/>
<dbReference type="eggNOG" id="COG0099">
    <property type="taxonomic scope" value="Bacteria"/>
</dbReference>
<dbReference type="HOGENOM" id="CLU_103849_1_2_4"/>
<dbReference type="OrthoDB" id="9803610at2"/>
<dbReference type="Proteomes" id="UP000001983">
    <property type="component" value="Chromosome"/>
</dbReference>
<dbReference type="GO" id="GO:0005829">
    <property type="term" value="C:cytosol"/>
    <property type="evidence" value="ECO:0007669"/>
    <property type="project" value="TreeGrafter"/>
</dbReference>
<dbReference type="GO" id="GO:0015935">
    <property type="term" value="C:small ribosomal subunit"/>
    <property type="evidence" value="ECO:0007669"/>
    <property type="project" value="TreeGrafter"/>
</dbReference>
<dbReference type="GO" id="GO:0019843">
    <property type="term" value="F:rRNA binding"/>
    <property type="evidence" value="ECO:0007669"/>
    <property type="project" value="UniProtKB-UniRule"/>
</dbReference>
<dbReference type="GO" id="GO:0003735">
    <property type="term" value="F:structural constituent of ribosome"/>
    <property type="evidence" value="ECO:0007669"/>
    <property type="project" value="InterPro"/>
</dbReference>
<dbReference type="GO" id="GO:0000049">
    <property type="term" value="F:tRNA binding"/>
    <property type="evidence" value="ECO:0007669"/>
    <property type="project" value="UniProtKB-UniRule"/>
</dbReference>
<dbReference type="GO" id="GO:0006412">
    <property type="term" value="P:translation"/>
    <property type="evidence" value="ECO:0007669"/>
    <property type="project" value="UniProtKB-UniRule"/>
</dbReference>
<dbReference type="FunFam" id="1.10.8.50:FF:000001">
    <property type="entry name" value="30S ribosomal protein S13"/>
    <property type="match status" value="1"/>
</dbReference>
<dbReference type="FunFam" id="4.10.910.10:FF:000001">
    <property type="entry name" value="30S ribosomal protein S13"/>
    <property type="match status" value="1"/>
</dbReference>
<dbReference type="Gene3D" id="1.10.8.50">
    <property type="match status" value="1"/>
</dbReference>
<dbReference type="Gene3D" id="4.10.910.10">
    <property type="entry name" value="30s ribosomal protein s13, domain 2"/>
    <property type="match status" value="1"/>
</dbReference>
<dbReference type="HAMAP" id="MF_01315">
    <property type="entry name" value="Ribosomal_uS13"/>
    <property type="match status" value="1"/>
</dbReference>
<dbReference type="InterPro" id="IPR027437">
    <property type="entry name" value="Rbsml_uS13_C"/>
</dbReference>
<dbReference type="InterPro" id="IPR001892">
    <property type="entry name" value="Ribosomal_uS13"/>
</dbReference>
<dbReference type="InterPro" id="IPR010979">
    <property type="entry name" value="Ribosomal_uS13-like_H2TH"/>
</dbReference>
<dbReference type="InterPro" id="IPR019980">
    <property type="entry name" value="Ribosomal_uS13_bac-type"/>
</dbReference>
<dbReference type="InterPro" id="IPR018269">
    <property type="entry name" value="Ribosomal_uS13_CS"/>
</dbReference>
<dbReference type="NCBIfam" id="TIGR03631">
    <property type="entry name" value="uS13_bact"/>
    <property type="match status" value="1"/>
</dbReference>
<dbReference type="PANTHER" id="PTHR10871">
    <property type="entry name" value="30S RIBOSOMAL PROTEIN S13/40S RIBOSOMAL PROTEIN S18"/>
    <property type="match status" value="1"/>
</dbReference>
<dbReference type="PANTHER" id="PTHR10871:SF1">
    <property type="entry name" value="SMALL RIBOSOMAL SUBUNIT PROTEIN US13M"/>
    <property type="match status" value="1"/>
</dbReference>
<dbReference type="Pfam" id="PF00416">
    <property type="entry name" value="Ribosomal_S13"/>
    <property type="match status" value="2"/>
</dbReference>
<dbReference type="PIRSF" id="PIRSF002134">
    <property type="entry name" value="Ribosomal_S13"/>
    <property type="match status" value="1"/>
</dbReference>
<dbReference type="SUPFAM" id="SSF46946">
    <property type="entry name" value="S13-like H2TH domain"/>
    <property type="match status" value="1"/>
</dbReference>
<dbReference type="PROSITE" id="PS00646">
    <property type="entry name" value="RIBOSOMAL_S13_1"/>
    <property type="match status" value="1"/>
</dbReference>
<dbReference type="PROSITE" id="PS50159">
    <property type="entry name" value="RIBOSOMAL_S13_2"/>
    <property type="match status" value="1"/>
</dbReference>
<evidence type="ECO:0000255" key="1">
    <source>
        <dbReference type="HAMAP-Rule" id="MF_01315"/>
    </source>
</evidence>
<evidence type="ECO:0000256" key="2">
    <source>
        <dbReference type="SAM" id="MobiDB-lite"/>
    </source>
</evidence>
<evidence type="ECO:0000305" key="3"/>
<sequence length="121" mass="13720">MARIAGINIPPQQHAEIGLTAIFGIGRTRARKICEACDIAYSKKIKDLTDGDLEKIRDQIALFTIEGDLRRETTMNIKRLMDIGCYRGFRHRRGLPMRGQRTRTNARTRKGPRKAAAALKK</sequence>
<reference key="1">
    <citation type="journal article" date="2008" name="Appl. Environ. Microbiol.">
        <title>The genome of Polaromonas sp. strain JS666: insights into the evolution of a hydrocarbon- and xenobiotic-degrading bacterium, and features of relevance to biotechnology.</title>
        <authorList>
            <person name="Mattes T.E."/>
            <person name="Alexander A.K."/>
            <person name="Richardson P.M."/>
            <person name="Munk A.C."/>
            <person name="Han C.S."/>
            <person name="Stothard P."/>
            <person name="Coleman N.V."/>
        </authorList>
    </citation>
    <scope>NUCLEOTIDE SEQUENCE [LARGE SCALE GENOMIC DNA]</scope>
    <source>
        <strain>JS666 / ATCC BAA-500</strain>
    </source>
</reference>